<gene>
    <name evidence="1" type="primary">ureC</name>
    <name type="ordered locus">Bmul_2490</name>
    <name type="ordered locus">BMULJ_00746</name>
</gene>
<name>URE1_BURM1</name>
<keyword id="KW-0963">Cytoplasm</keyword>
<keyword id="KW-0378">Hydrolase</keyword>
<keyword id="KW-0479">Metal-binding</keyword>
<keyword id="KW-0533">Nickel</keyword>
<keyword id="KW-1185">Reference proteome</keyword>
<proteinExistence type="inferred from homology"/>
<reference key="1">
    <citation type="submission" date="2007-10" db="EMBL/GenBank/DDBJ databases">
        <title>Complete sequence of chromosome 1 of Burkholderia multivorans ATCC 17616.</title>
        <authorList>
            <person name="Copeland A."/>
            <person name="Lucas S."/>
            <person name="Lapidus A."/>
            <person name="Barry K."/>
            <person name="Glavina del Rio T."/>
            <person name="Dalin E."/>
            <person name="Tice H."/>
            <person name="Pitluck S."/>
            <person name="Chain P."/>
            <person name="Malfatti S."/>
            <person name="Shin M."/>
            <person name="Vergez L."/>
            <person name="Schmutz J."/>
            <person name="Larimer F."/>
            <person name="Land M."/>
            <person name="Hauser L."/>
            <person name="Kyrpides N."/>
            <person name="Kim E."/>
            <person name="Tiedje J."/>
            <person name="Richardson P."/>
        </authorList>
    </citation>
    <scope>NUCLEOTIDE SEQUENCE [LARGE SCALE GENOMIC DNA]</scope>
    <source>
        <strain>ATCC 17616 / 249</strain>
    </source>
</reference>
<reference key="2">
    <citation type="submission" date="2007-04" db="EMBL/GenBank/DDBJ databases">
        <title>Complete genome sequence of Burkholderia multivorans ATCC 17616.</title>
        <authorList>
            <person name="Ohtsubo Y."/>
            <person name="Yamashita A."/>
            <person name="Kurokawa K."/>
            <person name="Takami H."/>
            <person name="Yuhara S."/>
            <person name="Nishiyama E."/>
            <person name="Endo R."/>
            <person name="Miyazaki R."/>
            <person name="Ono A."/>
            <person name="Yano K."/>
            <person name="Ito M."/>
            <person name="Sota M."/>
            <person name="Yuji N."/>
            <person name="Hattori M."/>
            <person name="Tsuda M."/>
        </authorList>
    </citation>
    <scope>NUCLEOTIDE SEQUENCE [LARGE SCALE GENOMIC DNA]</scope>
    <source>
        <strain>ATCC 17616 / 249</strain>
    </source>
</reference>
<protein>
    <recommendedName>
        <fullName evidence="1">Urease subunit alpha</fullName>
        <ecNumber evidence="1">3.5.1.5</ecNumber>
    </recommendedName>
    <alternativeName>
        <fullName evidence="1">Urea amidohydrolase subunit alpha</fullName>
    </alternativeName>
</protein>
<sequence length="568" mass="60914">MTLRLSRRAYAEMFGPTTGDRVRLADTDLLIEIERDFTIYGEEVKFGGGKVIRDGMGQSQRVAAEVPDTVITNAVILDHWGIVKADIAIKHGRIAAIGKAGNPDIQPGVTIPIGAGTEVIAGEGLIVTAGGIDTHIHFISPQQIDEALASGVTTMLGGGTGPATGTNATTCTPGPWHMERMLQAADGWPINLGFLGKGNASRPEPLLEQIAAGAIGLKLHEDWGTTPAAIDTCLSIADDTDTQVAIHTDTLNEAGFVESTVAAFKGRTIHTYHTEGAGGGHAPDILKVCGEANVLPSSTNPTRPYTINTLEEHLDMLMVCHHLDPSIAEDLAFAESRIRRETIAAEDILHDLGALSMLSSDSQAMGRVGEVIIRTWQTAHKMKVQRGALPEDSARNDNFRAKRYVAKYTINPAITHGIAHQVGSIEPGKWADLVLWEPAFFGIKPTMILKGGMIALAQMGDPNASIPTPQPVHYREMFATRGGALARTSLTFVSQLAADAGIAERYGLAKPIVPVRNCRQVTKADMIHNAWRPAISVDPETYDVIADGQLLTCEPASVLPMAQRYFLF</sequence>
<dbReference type="EC" id="3.5.1.5" evidence="1"/>
<dbReference type="EMBL" id="CP000868">
    <property type="protein sequence ID" value="ABX16174.1"/>
    <property type="molecule type" value="Genomic_DNA"/>
</dbReference>
<dbReference type="EMBL" id="AP009385">
    <property type="protein sequence ID" value="BAG42707.1"/>
    <property type="molecule type" value="Genomic_DNA"/>
</dbReference>
<dbReference type="RefSeq" id="WP_006414657.1">
    <property type="nucleotide sequence ID" value="NC_010084.1"/>
</dbReference>
<dbReference type="SMR" id="A9AF72"/>
<dbReference type="STRING" id="395019.BMULJ_00746"/>
<dbReference type="MEROPS" id="M38.982"/>
<dbReference type="GeneID" id="89569176"/>
<dbReference type="KEGG" id="bmj:BMULJ_00746"/>
<dbReference type="KEGG" id="bmu:Bmul_2490"/>
<dbReference type="eggNOG" id="COG0804">
    <property type="taxonomic scope" value="Bacteria"/>
</dbReference>
<dbReference type="HOGENOM" id="CLU_000980_0_0_4"/>
<dbReference type="UniPathway" id="UPA00258">
    <property type="reaction ID" value="UER00370"/>
</dbReference>
<dbReference type="Proteomes" id="UP000008815">
    <property type="component" value="Chromosome 1"/>
</dbReference>
<dbReference type="GO" id="GO:0005737">
    <property type="term" value="C:cytoplasm"/>
    <property type="evidence" value="ECO:0007669"/>
    <property type="project" value="UniProtKB-SubCell"/>
</dbReference>
<dbReference type="GO" id="GO:0016151">
    <property type="term" value="F:nickel cation binding"/>
    <property type="evidence" value="ECO:0007669"/>
    <property type="project" value="UniProtKB-UniRule"/>
</dbReference>
<dbReference type="GO" id="GO:0009039">
    <property type="term" value="F:urease activity"/>
    <property type="evidence" value="ECO:0007669"/>
    <property type="project" value="UniProtKB-UniRule"/>
</dbReference>
<dbReference type="GO" id="GO:0043419">
    <property type="term" value="P:urea catabolic process"/>
    <property type="evidence" value="ECO:0007669"/>
    <property type="project" value="UniProtKB-UniRule"/>
</dbReference>
<dbReference type="CDD" id="cd00375">
    <property type="entry name" value="Urease_alpha"/>
    <property type="match status" value="1"/>
</dbReference>
<dbReference type="Gene3D" id="3.20.20.140">
    <property type="entry name" value="Metal-dependent hydrolases"/>
    <property type="match status" value="1"/>
</dbReference>
<dbReference type="Gene3D" id="2.30.40.10">
    <property type="entry name" value="Urease, subunit C, domain 1"/>
    <property type="match status" value="1"/>
</dbReference>
<dbReference type="HAMAP" id="MF_01953">
    <property type="entry name" value="Urease_alpha"/>
    <property type="match status" value="1"/>
</dbReference>
<dbReference type="InterPro" id="IPR006680">
    <property type="entry name" value="Amidohydro-rel"/>
</dbReference>
<dbReference type="InterPro" id="IPR011059">
    <property type="entry name" value="Metal-dep_hydrolase_composite"/>
</dbReference>
<dbReference type="InterPro" id="IPR032466">
    <property type="entry name" value="Metal_Hydrolase"/>
</dbReference>
<dbReference type="InterPro" id="IPR011612">
    <property type="entry name" value="Urease_alpha_N_dom"/>
</dbReference>
<dbReference type="InterPro" id="IPR050112">
    <property type="entry name" value="Urease_alpha_subunit"/>
</dbReference>
<dbReference type="InterPro" id="IPR017950">
    <property type="entry name" value="Urease_AS"/>
</dbReference>
<dbReference type="InterPro" id="IPR005848">
    <property type="entry name" value="Urease_asu"/>
</dbReference>
<dbReference type="InterPro" id="IPR017951">
    <property type="entry name" value="Urease_asu_c"/>
</dbReference>
<dbReference type="InterPro" id="IPR029754">
    <property type="entry name" value="Urease_Ni-bd"/>
</dbReference>
<dbReference type="NCBIfam" id="NF009685">
    <property type="entry name" value="PRK13206.1"/>
    <property type="match status" value="1"/>
</dbReference>
<dbReference type="NCBIfam" id="NF009686">
    <property type="entry name" value="PRK13207.1"/>
    <property type="match status" value="1"/>
</dbReference>
<dbReference type="NCBIfam" id="TIGR01792">
    <property type="entry name" value="urease_alph"/>
    <property type="match status" value="1"/>
</dbReference>
<dbReference type="PANTHER" id="PTHR43440">
    <property type="entry name" value="UREASE"/>
    <property type="match status" value="1"/>
</dbReference>
<dbReference type="PANTHER" id="PTHR43440:SF1">
    <property type="entry name" value="UREASE"/>
    <property type="match status" value="1"/>
</dbReference>
<dbReference type="Pfam" id="PF01979">
    <property type="entry name" value="Amidohydro_1"/>
    <property type="match status" value="1"/>
</dbReference>
<dbReference type="Pfam" id="PF00449">
    <property type="entry name" value="Urease_alpha"/>
    <property type="match status" value="1"/>
</dbReference>
<dbReference type="PRINTS" id="PR01752">
    <property type="entry name" value="UREASE"/>
</dbReference>
<dbReference type="SUPFAM" id="SSF51338">
    <property type="entry name" value="Composite domain of metallo-dependent hydrolases"/>
    <property type="match status" value="2"/>
</dbReference>
<dbReference type="SUPFAM" id="SSF51556">
    <property type="entry name" value="Metallo-dependent hydrolases"/>
    <property type="match status" value="1"/>
</dbReference>
<dbReference type="PROSITE" id="PS01120">
    <property type="entry name" value="UREASE_1"/>
    <property type="match status" value="1"/>
</dbReference>
<dbReference type="PROSITE" id="PS00145">
    <property type="entry name" value="UREASE_2"/>
    <property type="match status" value="1"/>
</dbReference>
<dbReference type="PROSITE" id="PS51368">
    <property type="entry name" value="UREASE_3"/>
    <property type="match status" value="1"/>
</dbReference>
<feature type="chain" id="PRO_1000188867" description="Urease subunit alpha">
    <location>
        <begin position="1"/>
        <end position="568"/>
    </location>
</feature>
<feature type="domain" description="Urease" evidence="1">
    <location>
        <begin position="130"/>
        <end position="568"/>
    </location>
</feature>
<feature type="active site" description="Proton donor" evidence="1">
    <location>
        <position position="321"/>
    </location>
</feature>
<feature type="binding site" evidence="1">
    <location>
        <position position="135"/>
    </location>
    <ligand>
        <name>Ni(2+)</name>
        <dbReference type="ChEBI" id="CHEBI:49786"/>
        <label>1</label>
    </ligand>
</feature>
<feature type="binding site" evidence="1">
    <location>
        <position position="137"/>
    </location>
    <ligand>
        <name>Ni(2+)</name>
        <dbReference type="ChEBI" id="CHEBI:49786"/>
        <label>1</label>
    </ligand>
</feature>
<feature type="binding site" description="via carbamate group" evidence="1">
    <location>
        <position position="218"/>
    </location>
    <ligand>
        <name>Ni(2+)</name>
        <dbReference type="ChEBI" id="CHEBI:49786"/>
        <label>1</label>
    </ligand>
</feature>
<feature type="binding site" description="via carbamate group" evidence="1">
    <location>
        <position position="218"/>
    </location>
    <ligand>
        <name>Ni(2+)</name>
        <dbReference type="ChEBI" id="CHEBI:49786"/>
        <label>2</label>
    </ligand>
</feature>
<feature type="binding site" evidence="1">
    <location>
        <position position="220"/>
    </location>
    <ligand>
        <name>substrate</name>
    </ligand>
</feature>
<feature type="binding site" evidence="1">
    <location>
        <position position="247"/>
    </location>
    <ligand>
        <name>Ni(2+)</name>
        <dbReference type="ChEBI" id="CHEBI:49786"/>
        <label>2</label>
    </ligand>
</feature>
<feature type="binding site" evidence="1">
    <location>
        <position position="273"/>
    </location>
    <ligand>
        <name>Ni(2+)</name>
        <dbReference type="ChEBI" id="CHEBI:49786"/>
        <label>2</label>
    </ligand>
</feature>
<feature type="binding site" evidence="1">
    <location>
        <position position="361"/>
    </location>
    <ligand>
        <name>Ni(2+)</name>
        <dbReference type="ChEBI" id="CHEBI:49786"/>
        <label>1</label>
    </ligand>
</feature>
<feature type="modified residue" description="N6-carboxylysine" evidence="1">
    <location>
        <position position="218"/>
    </location>
</feature>
<comment type="catalytic activity">
    <reaction evidence="1">
        <text>urea + 2 H2O + H(+) = hydrogencarbonate + 2 NH4(+)</text>
        <dbReference type="Rhea" id="RHEA:20557"/>
        <dbReference type="ChEBI" id="CHEBI:15377"/>
        <dbReference type="ChEBI" id="CHEBI:15378"/>
        <dbReference type="ChEBI" id="CHEBI:16199"/>
        <dbReference type="ChEBI" id="CHEBI:17544"/>
        <dbReference type="ChEBI" id="CHEBI:28938"/>
        <dbReference type="EC" id="3.5.1.5"/>
    </reaction>
</comment>
<comment type="cofactor">
    <cofactor evidence="1">
        <name>Ni cation</name>
        <dbReference type="ChEBI" id="CHEBI:25516"/>
    </cofactor>
    <text evidence="1">Binds 2 nickel ions per subunit.</text>
</comment>
<comment type="pathway">
    <text evidence="1">Nitrogen metabolism; urea degradation; CO(2) and NH(3) from urea (urease route): step 1/1.</text>
</comment>
<comment type="subunit">
    <text evidence="1">Heterotrimer of UreA (gamma), UreB (beta) and UreC (alpha) subunits. Three heterotrimers associate to form the active enzyme.</text>
</comment>
<comment type="subcellular location">
    <subcellularLocation>
        <location evidence="1">Cytoplasm</location>
    </subcellularLocation>
</comment>
<comment type="PTM">
    <text evidence="1">Carboxylation allows a single lysine to coordinate two nickel ions.</text>
</comment>
<comment type="similarity">
    <text evidence="1">Belongs to the metallo-dependent hydrolases superfamily. Urease alpha subunit family.</text>
</comment>
<evidence type="ECO:0000255" key="1">
    <source>
        <dbReference type="HAMAP-Rule" id="MF_01953"/>
    </source>
</evidence>
<accession>A9AF72</accession>
<organism>
    <name type="scientific">Burkholderia multivorans (strain ATCC 17616 / 249)</name>
    <dbReference type="NCBI Taxonomy" id="395019"/>
    <lineage>
        <taxon>Bacteria</taxon>
        <taxon>Pseudomonadati</taxon>
        <taxon>Pseudomonadota</taxon>
        <taxon>Betaproteobacteria</taxon>
        <taxon>Burkholderiales</taxon>
        <taxon>Burkholderiaceae</taxon>
        <taxon>Burkholderia</taxon>
        <taxon>Burkholderia cepacia complex</taxon>
    </lineage>
</organism>